<name>TFLI_BPT5</name>
<evidence type="ECO:0000269" key="1">
    <source>
    </source>
</evidence>
<evidence type="ECO:0000305" key="2">
    <source>
    </source>
</evidence>
<evidence type="ECO:0000305" key="3">
    <source>
    </source>
</evidence>
<evidence type="ECO:0000312" key="4">
    <source>
        <dbReference type="EMBL" id="AAS77110.1"/>
    </source>
</evidence>
<evidence type="ECO:0000312" key="5">
    <source>
        <dbReference type="EMBL" id="AAU05215.1"/>
    </source>
</evidence>
<evidence type="ECO:0000312" key="6">
    <source>
        <dbReference type="EMBL" id="AAX11998.1"/>
    </source>
</evidence>
<sequence>MQFVPIKDAPGYLVNEAGDVFSTFTNKVLSRYIVDGYPAVKLQINGKQTSVLIHRIISHVFGDLYNLFDPELEVDHKDRDRLNLSKDNLQVLSKIEHQRKTNKDNGWSDSRVPCPLCGSLMLQRSVTCTNCKPKPTGRLIKPELSLDDITEKVLLMGWVKAAKELEVSESTLRRRYTKLTGLSPKVLTEQRKSK</sequence>
<reference key="1">
    <citation type="journal article" date="1983" name="FEBS Lett.">
        <title>Cloning and DNA sequence of the genes for two bacteriophage T5 tRNAsSer.</title>
        <authorList>
            <person name="Kryukov V.M."/>
            <person name="Ksenzenko V.N."/>
            <person name="Kaliman A.V."/>
            <person name="Bayev A.A."/>
        </authorList>
    </citation>
    <scope>NUCLEOTIDE SEQUENCE [GENOMIC DNA]</scope>
</reference>
<reference key="2">
    <citation type="journal article" date="1987" name="Nucleic Acids Res.">
        <title>Nucleotide sequence of the bacteriophage T5 DNA fragment containing a distal part of tRNA gene region.</title>
        <authorList>
            <person name="Ksenzenko V.N."/>
            <person name="Shlyapnikov M.G."/>
            <person name="Azbarov V.G."/>
            <person name="Garcia O."/>
            <person name="Kryukov V.M."/>
            <person name="Bayev A.A."/>
        </authorList>
    </citation>
    <scope>NUCLEOTIDE SEQUENCE [GENOMIC DNA]</scope>
</reference>
<reference key="3">
    <citation type="journal article" date="1994" name="Mol. Biol. (Mosk.)">
        <title>Features of the structure of transfer RNA coded by bacteriophage T5.</title>
        <authorList>
            <person name="Shliapnikov M.G."/>
            <person name="Ksenzenko V.N."/>
        </authorList>
    </citation>
    <scope>NUCLEOTIDE SEQUENCE [GENOMIC DNA]</scope>
</reference>
<reference key="4">
    <citation type="journal article" date="1998" name="Mol. Biol. (Mosk.)">
        <title>Amber-suppressive tRNA from bacteriophage T5: construction of genes and determination of the effectiveness of suppression in vivo.</title>
        <authorList>
            <person name="Pan'kova N.V."/>
            <person name="Karamyshev A.L."/>
            <person name="Shliapnikov M.G."/>
            <person name="Presich A.N."/>
            <person name="Ksenzenko V.N."/>
        </authorList>
    </citation>
    <scope>NUCLEOTIDE SEQUENCE [GENOMIC DNA]</scope>
</reference>
<reference key="5">
    <citation type="submission" date="2004-01" db="EMBL/GenBank/DDBJ databases">
        <title>Bacteriophage T5 complete genome.</title>
        <authorList>
            <person name="Ksenzenko V.N."/>
            <person name="Kaliman A.V."/>
            <person name="Krutilina A.I."/>
            <person name="Shlyapnikov M.G."/>
        </authorList>
    </citation>
    <scope>NUCLEOTIDE SEQUENCE [LARGE SCALE GENOMIC DNA]</scope>
</reference>
<reference key="6">
    <citation type="journal article" date="2005" name="Virology">
        <title>Complete genome sequence of bacteriophage T5.</title>
        <authorList>
            <person name="Wang J."/>
            <person name="Jiang Y."/>
            <person name="Vincent M."/>
            <person name="Sun Y."/>
            <person name="Yu H."/>
            <person name="Wang J."/>
            <person name="Bao Q."/>
            <person name="Kong H."/>
            <person name="Hu S."/>
        </authorList>
    </citation>
    <scope>NUCLEOTIDE SEQUENCE [LARGE SCALE GENOMIC DNA]</scope>
    <scope>INDUCTION</scope>
    <source>
        <strain>ATCC 11303-B5</strain>
    </source>
</reference>
<reference key="7">
    <citation type="journal article" date="2014" name="J. Virol.">
        <title>Insights into bacteriophage T5 structure from analysis of its morphogenesis genes and protein components.</title>
        <authorList>
            <person name="Zivanovic Y."/>
            <person name="Confalonieri F."/>
            <person name="Ponchon L."/>
            <person name="Lurz R."/>
            <person name="Chami M."/>
            <person name="Flayhan A."/>
            <person name="Renouard M."/>
            <person name="Huet A."/>
            <person name="Decottignies P."/>
            <person name="Davidson A.R."/>
            <person name="Breyton C."/>
            <person name="Boulanger P."/>
        </authorList>
    </citation>
    <scope>NUCLEOTIDE SEQUENCE [LARGE SCALE GENOMIC DNA]</scope>
    <source>
        <strain>St0 deletion mutant</strain>
    </source>
</reference>
<reference key="8">
    <citation type="journal article" date="2004" name="Mol. Biol. (Mosk.)">
        <title>Novel site-specific endonucleases F-TflI, F-TflII and F-TflIV encoded by the bacteriophage T5.</title>
        <authorList>
            <person name="Akulenko N.V."/>
            <person name="Ivashina T.V."/>
            <person name="Shaloiko L.A."/>
            <person name="Shliapnikov M.G."/>
            <person name="Ksenzenko V.N."/>
        </authorList>
    </citation>
    <scope>FUNCTION</scope>
</reference>
<comment type="function">
    <text evidence="1">Endonuclease that cleaves only one strand of asymmetric DNA substrates thereby introducing interruptions into the template or coding strand.</text>
</comment>
<comment type="induction">
    <text evidence="3">Expressed in the early phase of the viral replicative cycle.</text>
</comment>
<dbReference type="EC" id="3.1.21.-" evidence="2"/>
<dbReference type="EMBL" id="AY543070">
    <property type="protein sequence ID" value="AAS77110.1"/>
    <property type="molecule type" value="Genomic_DNA"/>
</dbReference>
<dbReference type="EMBL" id="AY692264">
    <property type="protein sequence ID" value="AAU05215.1"/>
    <property type="molecule type" value="Genomic_DNA"/>
</dbReference>
<dbReference type="EMBL" id="AY587007">
    <property type="protein sequence ID" value="AAX11998.1"/>
    <property type="molecule type" value="Genomic_DNA"/>
</dbReference>
<dbReference type="RefSeq" id="YP_006892.1">
    <property type="nucleotide sequence ID" value="NC_005859.1"/>
</dbReference>
<dbReference type="SMR" id="Q6QGM3"/>
<dbReference type="REBASE" id="10521">
    <property type="entry name" value="F-EcoT5I"/>
</dbReference>
<dbReference type="GeneID" id="2777580"/>
<dbReference type="KEGG" id="vg:2777580"/>
<dbReference type="Proteomes" id="UP000002107">
    <property type="component" value="Genome"/>
</dbReference>
<dbReference type="Proteomes" id="UP000002141">
    <property type="component" value="Segment"/>
</dbReference>
<dbReference type="Proteomes" id="UP000002503">
    <property type="component" value="Segment"/>
</dbReference>
<dbReference type="GO" id="GO:0003677">
    <property type="term" value="F:DNA binding"/>
    <property type="evidence" value="ECO:0007669"/>
    <property type="project" value="UniProtKB-KW"/>
</dbReference>
<dbReference type="GO" id="GO:0004519">
    <property type="term" value="F:endonuclease activity"/>
    <property type="evidence" value="ECO:0000314"/>
    <property type="project" value="UniProtKB"/>
</dbReference>
<dbReference type="Gene3D" id="3.90.75.20">
    <property type="match status" value="1"/>
</dbReference>
<dbReference type="InterPro" id="IPR044925">
    <property type="entry name" value="His-Me_finger_sf"/>
</dbReference>
<dbReference type="InterPro" id="IPR003615">
    <property type="entry name" value="HNH_nuc"/>
</dbReference>
<dbReference type="Pfam" id="PF13392">
    <property type="entry name" value="HNH_3"/>
    <property type="match status" value="1"/>
</dbReference>
<dbReference type="SUPFAM" id="SSF54060">
    <property type="entry name" value="His-Me finger endonucleases"/>
    <property type="match status" value="1"/>
</dbReference>
<organismHost>
    <name type="scientific">Escherichia coli</name>
    <dbReference type="NCBI Taxonomy" id="562"/>
</organismHost>
<feature type="chain" id="PRO_0000435548" description="H-N-H endonuclease F-TflI">
    <location>
        <begin position="1"/>
        <end position="194"/>
    </location>
</feature>
<protein>
    <recommendedName>
        <fullName evidence="4">H-N-H endonuclease F-TflI</fullName>
        <ecNumber evidence="2">3.1.21.-</ecNumber>
    </recommendedName>
    <alternativeName>
        <fullName evidence="6">HNH endodeoxyribonuclease F-TflI</fullName>
    </alternativeName>
    <alternativeName>
        <fullName evidence="5">HNH endonuclease F-TflI</fullName>
    </alternativeName>
</protein>
<accession>Q6QGM3</accession>
<gene>
    <name evidence="4" type="primary">hegC</name>
    <name evidence="4" type="ORF">T5.064</name>
    <name evidence="5" type="ORF">T5p062</name>
</gene>
<proteinExistence type="evidence at transcript level"/>
<organism>
    <name type="scientific">Escherichia phage T5</name>
    <name type="common">Enterobacteria phage T5</name>
    <dbReference type="NCBI Taxonomy" id="2695836"/>
    <lineage>
        <taxon>Viruses</taxon>
        <taxon>Duplodnaviria</taxon>
        <taxon>Heunggongvirae</taxon>
        <taxon>Uroviricota</taxon>
        <taxon>Caudoviricetes</taxon>
        <taxon>Demerecviridae</taxon>
        <taxon>Markadamsvirinae</taxon>
        <taxon>Tequintavirus</taxon>
        <taxon>Tequintavirus T5</taxon>
    </lineage>
</organism>
<keyword id="KW-0238">DNA-binding</keyword>
<keyword id="KW-0244">Early protein</keyword>
<keyword id="KW-0255">Endonuclease</keyword>
<keyword id="KW-0378">Hydrolase</keyword>
<keyword id="KW-0540">Nuclease</keyword>
<keyword id="KW-1185">Reference proteome</keyword>